<reference key="1">
    <citation type="journal article" date="2005" name="Proc. Natl. Acad. Sci. U.S.A.">
        <title>Complete genome sequence of Vibrio fischeri: a symbiotic bacterium with pathogenic congeners.</title>
        <authorList>
            <person name="Ruby E.G."/>
            <person name="Urbanowski M."/>
            <person name="Campbell J."/>
            <person name="Dunn A."/>
            <person name="Faini M."/>
            <person name="Gunsalus R."/>
            <person name="Lostroh P."/>
            <person name="Lupp C."/>
            <person name="McCann J."/>
            <person name="Millikan D."/>
            <person name="Schaefer A."/>
            <person name="Stabb E."/>
            <person name="Stevens A."/>
            <person name="Visick K."/>
            <person name="Whistler C."/>
            <person name="Greenberg E.P."/>
        </authorList>
    </citation>
    <scope>NUCLEOTIDE SEQUENCE [LARGE SCALE GENOMIC DNA]</scope>
    <source>
        <strain>ATCC 700601 / ES114</strain>
    </source>
</reference>
<comment type="similarity">
    <text evidence="1">Belongs to the bacterial ribosomal protein bL35 family.</text>
</comment>
<dbReference type="EMBL" id="CP000020">
    <property type="protein sequence ID" value="AAW85712.1"/>
    <property type="molecule type" value="Genomic_DNA"/>
</dbReference>
<dbReference type="RefSeq" id="WP_005419080.1">
    <property type="nucleotide sequence ID" value="NZ_CAWLES010000001.1"/>
</dbReference>
<dbReference type="RefSeq" id="YP_204600.1">
    <property type="nucleotide sequence ID" value="NC_006840.2"/>
</dbReference>
<dbReference type="SMR" id="Q5E5I4"/>
<dbReference type="STRING" id="312309.VF_1217"/>
<dbReference type="EnsemblBacteria" id="AAW85712">
    <property type="protein sequence ID" value="AAW85712"/>
    <property type="gene ID" value="VF_1217"/>
</dbReference>
<dbReference type="GeneID" id="56274958"/>
<dbReference type="KEGG" id="vfi:VF_1217"/>
<dbReference type="PATRIC" id="fig|312309.11.peg.1224"/>
<dbReference type="eggNOG" id="COG0291">
    <property type="taxonomic scope" value="Bacteria"/>
</dbReference>
<dbReference type="HOGENOM" id="CLU_169643_4_3_6"/>
<dbReference type="OrthoDB" id="47476at2"/>
<dbReference type="PRO" id="PR:Q5E5I4"/>
<dbReference type="Proteomes" id="UP000000537">
    <property type="component" value="Chromosome I"/>
</dbReference>
<dbReference type="GO" id="GO:0022625">
    <property type="term" value="C:cytosolic large ribosomal subunit"/>
    <property type="evidence" value="ECO:0007669"/>
    <property type="project" value="TreeGrafter"/>
</dbReference>
<dbReference type="GO" id="GO:0003735">
    <property type="term" value="F:structural constituent of ribosome"/>
    <property type="evidence" value="ECO:0007669"/>
    <property type="project" value="InterPro"/>
</dbReference>
<dbReference type="GO" id="GO:0006412">
    <property type="term" value="P:translation"/>
    <property type="evidence" value="ECO:0007669"/>
    <property type="project" value="UniProtKB-UniRule"/>
</dbReference>
<dbReference type="FunFam" id="4.10.410.60:FF:000001">
    <property type="entry name" value="50S ribosomal protein L35"/>
    <property type="match status" value="1"/>
</dbReference>
<dbReference type="Gene3D" id="4.10.410.60">
    <property type="match status" value="1"/>
</dbReference>
<dbReference type="HAMAP" id="MF_00514">
    <property type="entry name" value="Ribosomal_bL35"/>
    <property type="match status" value="1"/>
</dbReference>
<dbReference type="InterPro" id="IPR001706">
    <property type="entry name" value="Ribosomal_bL35"/>
</dbReference>
<dbReference type="InterPro" id="IPR021137">
    <property type="entry name" value="Ribosomal_bL35-like"/>
</dbReference>
<dbReference type="InterPro" id="IPR018265">
    <property type="entry name" value="Ribosomal_bL35_CS"/>
</dbReference>
<dbReference type="InterPro" id="IPR037229">
    <property type="entry name" value="Ribosomal_bL35_sf"/>
</dbReference>
<dbReference type="NCBIfam" id="TIGR00001">
    <property type="entry name" value="rpmI_bact"/>
    <property type="match status" value="1"/>
</dbReference>
<dbReference type="PANTHER" id="PTHR33343">
    <property type="entry name" value="54S RIBOSOMAL PROTEIN BL35M"/>
    <property type="match status" value="1"/>
</dbReference>
<dbReference type="PANTHER" id="PTHR33343:SF1">
    <property type="entry name" value="LARGE RIBOSOMAL SUBUNIT PROTEIN BL35M"/>
    <property type="match status" value="1"/>
</dbReference>
<dbReference type="Pfam" id="PF01632">
    <property type="entry name" value="Ribosomal_L35p"/>
    <property type="match status" value="1"/>
</dbReference>
<dbReference type="PRINTS" id="PR00064">
    <property type="entry name" value="RIBOSOMALL35"/>
</dbReference>
<dbReference type="SUPFAM" id="SSF143034">
    <property type="entry name" value="L35p-like"/>
    <property type="match status" value="1"/>
</dbReference>
<dbReference type="PROSITE" id="PS00936">
    <property type="entry name" value="RIBOSOMAL_L35"/>
    <property type="match status" value="1"/>
</dbReference>
<proteinExistence type="inferred from homology"/>
<organism>
    <name type="scientific">Aliivibrio fischeri (strain ATCC 700601 / ES114)</name>
    <name type="common">Vibrio fischeri</name>
    <dbReference type="NCBI Taxonomy" id="312309"/>
    <lineage>
        <taxon>Bacteria</taxon>
        <taxon>Pseudomonadati</taxon>
        <taxon>Pseudomonadota</taxon>
        <taxon>Gammaproteobacteria</taxon>
        <taxon>Vibrionales</taxon>
        <taxon>Vibrionaceae</taxon>
        <taxon>Aliivibrio</taxon>
    </lineage>
</organism>
<feature type="chain" id="PRO_0000258781" description="Large ribosomal subunit protein bL35">
    <location>
        <begin position="1"/>
        <end position="64"/>
    </location>
</feature>
<evidence type="ECO:0000255" key="1">
    <source>
        <dbReference type="HAMAP-Rule" id="MF_00514"/>
    </source>
</evidence>
<evidence type="ECO:0000305" key="2"/>
<keyword id="KW-1185">Reference proteome</keyword>
<keyword id="KW-0687">Ribonucleoprotein</keyword>
<keyword id="KW-0689">Ribosomal protein</keyword>
<sequence length="64" mass="7264">MPKMKSNKGASKRFKKTAGGIKFKHATKRHILTKRTTKNKRQLRPNSLLPKCEVAAVARMLPYA</sequence>
<accession>Q5E5I4</accession>
<protein>
    <recommendedName>
        <fullName evidence="1">Large ribosomal subunit protein bL35</fullName>
    </recommendedName>
    <alternativeName>
        <fullName evidence="2">50S ribosomal protein L35</fullName>
    </alternativeName>
</protein>
<gene>
    <name evidence="1" type="primary">rpmI</name>
    <name type="ordered locus">VF_1217</name>
</gene>
<name>RL35_ALIF1</name>